<feature type="chain" id="PRO_1000018167" description="Tryptophan synthase alpha chain">
    <location>
        <begin position="1"/>
        <end position="265"/>
    </location>
</feature>
<feature type="active site" description="Proton acceptor" evidence="1">
    <location>
        <position position="41"/>
    </location>
</feature>
<feature type="active site" description="Proton acceptor" evidence="1">
    <location>
        <position position="52"/>
    </location>
</feature>
<organism>
    <name type="scientific">Bacillus velezensis (strain DSM 23117 / BGSC 10A6 / LMG 26770 / FZB42)</name>
    <name type="common">Bacillus amyloliquefaciens subsp. plantarum</name>
    <dbReference type="NCBI Taxonomy" id="326423"/>
    <lineage>
        <taxon>Bacteria</taxon>
        <taxon>Bacillati</taxon>
        <taxon>Bacillota</taxon>
        <taxon>Bacilli</taxon>
        <taxon>Bacillales</taxon>
        <taxon>Bacillaceae</taxon>
        <taxon>Bacillus</taxon>
        <taxon>Bacillus amyloliquefaciens group</taxon>
    </lineage>
</organism>
<gene>
    <name evidence="1" type="primary">trpA</name>
    <name type="ordered locus">RBAM_020790</name>
</gene>
<keyword id="KW-0028">Amino-acid biosynthesis</keyword>
<keyword id="KW-0057">Aromatic amino acid biosynthesis</keyword>
<keyword id="KW-0456">Lyase</keyword>
<keyword id="KW-0822">Tryptophan biosynthesis</keyword>
<reference key="1">
    <citation type="journal article" date="2007" name="Nat. Biotechnol.">
        <title>Comparative analysis of the complete genome sequence of the plant growth-promoting bacterium Bacillus amyloliquefaciens FZB42.</title>
        <authorList>
            <person name="Chen X.H."/>
            <person name="Koumoutsi A."/>
            <person name="Scholz R."/>
            <person name="Eisenreich A."/>
            <person name="Schneider K."/>
            <person name="Heinemeyer I."/>
            <person name="Morgenstern B."/>
            <person name="Voss B."/>
            <person name="Hess W.R."/>
            <person name="Reva O."/>
            <person name="Junge H."/>
            <person name="Voigt B."/>
            <person name="Jungblut P.R."/>
            <person name="Vater J."/>
            <person name="Suessmuth R."/>
            <person name="Liesegang H."/>
            <person name="Strittmatter A."/>
            <person name="Gottschalk G."/>
            <person name="Borriss R."/>
        </authorList>
    </citation>
    <scope>NUCLEOTIDE SEQUENCE [LARGE SCALE GENOMIC DNA]</scope>
    <source>
        <strain>DSM 23117 / BGSC 10A6 / LMG 26770 / FZB42</strain>
    </source>
</reference>
<accession>A7Z615</accession>
<evidence type="ECO:0000255" key="1">
    <source>
        <dbReference type="HAMAP-Rule" id="MF_00131"/>
    </source>
</evidence>
<name>TRPA_BACVZ</name>
<comment type="function">
    <text evidence="1">The alpha subunit is responsible for the aldol cleavage of indoleglycerol phosphate to indole and glyceraldehyde 3-phosphate.</text>
</comment>
<comment type="catalytic activity">
    <reaction evidence="1">
        <text>(1S,2R)-1-C-(indol-3-yl)glycerol 3-phosphate + L-serine = D-glyceraldehyde 3-phosphate + L-tryptophan + H2O</text>
        <dbReference type="Rhea" id="RHEA:10532"/>
        <dbReference type="ChEBI" id="CHEBI:15377"/>
        <dbReference type="ChEBI" id="CHEBI:33384"/>
        <dbReference type="ChEBI" id="CHEBI:57912"/>
        <dbReference type="ChEBI" id="CHEBI:58866"/>
        <dbReference type="ChEBI" id="CHEBI:59776"/>
        <dbReference type="EC" id="4.2.1.20"/>
    </reaction>
</comment>
<comment type="pathway">
    <text evidence="1">Amino-acid biosynthesis; L-tryptophan biosynthesis; L-tryptophan from chorismate: step 5/5.</text>
</comment>
<comment type="subunit">
    <text evidence="1">Tetramer of two alpha and two beta chains.</text>
</comment>
<comment type="similarity">
    <text evidence="1">Belongs to the TrpA family.</text>
</comment>
<sequence>MFNLRDSEKLFIPFITAGDPLPDISVELAISLQNAGASALEIGVPYTDPLADGPVIQRASKRALENGMNIVKAIELGGKMKKNGVHIPIILFTYYNPVLQLEKEYFFALLRENDIDGLLVPDLPLEESALLQMTCKKENIAYISLVAPTSEDRLKIITEQACGFVYCVSSLGVTGVRSEFDPSVYSFIRKVKEFSSVPVAVGFGISNRKQVDGMNEISDGVVVGSALVKKIEELKTKLVNPGTRADALLEFEEYAKTFGRLYSVK</sequence>
<protein>
    <recommendedName>
        <fullName evidence="1">Tryptophan synthase alpha chain</fullName>
        <ecNumber evidence="1">4.2.1.20</ecNumber>
    </recommendedName>
</protein>
<dbReference type="EC" id="4.2.1.20" evidence="1"/>
<dbReference type="EMBL" id="CP000560">
    <property type="protein sequence ID" value="ABS74441.1"/>
    <property type="molecule type" value="Genomic_DNA"/>
</dbReference>
<dbReference type="RefSeq" id="WP_012117856.1">
    <property type="nucleotide sequence ID" value="NC_009725.2"/>
</dbReference>
<dbReference type="SMR" id="A7Z615"/>
<dbReference type="GeneID" id="93081214"/>
<dbReference type="KEGG" id="bay:RBAM_020790"/>
<dbReference type="HOGENOM" id="CLU_016734_0_0_9"/>
<dbReference type="UniPathway" id="UPA00035">
    <property type="reaction ID" value="UER00044"/>
</dbReference>
<dbReference type="Proteomes" id="UP000001120">
    <property type="component" value="Chromosome"/>
</dbReference>
<dbReference type="GO" id="GO:0005829">
    <property type="term" value="C:cytosol"/>
    <property type="evidence" value="ECO:0007669"/>
    <property type="project" value="TreeGrafter"/>
</dbReference>
<dbReference type="GO" id="GO:0004834">
    <property type="term" value="F:tryptophan synthase activity"/>
    <property type="evidence" value="ECO:0007669"/>
    <property type="project" value="UniProtKB-UniRule"/>
</dbReference>
<dbReference type="CDD" id="cd04724">
    <property type="entry name" value="Tryptophan_synthase_alpha"/>
    <property type="match status" value="1"/>
</dbReference>
<dbReference type="FunFam" id="3.20.20.70:FF:000037">
    <property type="entry name" value="Tryptophan synthase alpha chain"/>
    <property type="match status" value="1"/>
</dbReference>
<dbReference type="Gene3D" id="3.20.20.70">
    <property type="entry name" value="Aldolase class I"/>
    <property type="match status" value="1"/>
</dbReference>
<dbReference type="HAMAP" id="MF_00131">
    <property type="entry name" value="Trp_synth_alpha"/>
    <property type="match status" value="1"/>
</dbReference>
<dbReference type="InterPro" id="IPR013785">
    <property type="entry name" value="Aldolase_TIM"/>
</dbReference>
<dbReference type="InterPro" id="IPR011060">
    <property type="entry name" value="RibuloseP-bd_barrel"/>
</dbReference>
<dbReference type="InterPro" id="IPR018204">
    <property type="entry name" value="Trp_synthase_alpha_AS"/>
</dbReference>
<dbReference type="InterPro" id="IPR002028">
    <property type="entry name" value="Trp_synthase_suA"/>
</dbReference>
<dbReference type="NCBIfam" id="TIGR00262">
    <property type="entry name" value="trpA"/>
    <property type="match status" value="1"/>
</dbReference>
<dbReference type="PANTHER" id="PTHR43406:SF1">
    <property type="entry name" value="TRYPTOPHAN SYNTHASE ALPHA CHAIN, CHLOROPLASTIC"/>
    <property type="match status" value="1"/>
</dbReference>
<dbReference type="PANTHER" id="PTHR43406">
    <property type="entry name" value="TRYPTOPHAN SYNTHASE, ALPHA CHAIN"/>
    <property type="match status" value="1"/>
</dbReference>
<dbReference type="Pfam" id="PF00290">
    <property type="entry name" value="Trp_syntA"/>
    <property type="match status" value="1"/>
</dbReference>
<dbReference type="SUPFAM" id="SSF51366">
    <property type="entry name" value="Ribulose-phoshate binding barrel"/>
    <property type="match status" value="1"/>
</dbReference>
<dbReference type="PROSITE" id="PS00167">
    <property type="entry name" value="TRP_SYNTHASE_ALPHA"/>
    <property type="match status" value="1"/>
</dbReference>
<proteinExistence type="inferred from homology"/>